<name>BGH9A_BACO1</name>
<proteinExistence type="evidence at protein level"/>
<comment type="function">
    <text evidence="5">Catalyzes endohydrolysis of 1,4-beta-D-glucosidic linkages in xyloglucan with retention of the beta-configuration of the glycosyl residues in xyloglucan degradation. Cleaves the backbone of the 3 major types of natural xyloglucans (seed galactoxyloglucan from tamarind kernel, dicot fucogalactoxyloglucan from lettuce leaves, and solanaceous arabinogalactoxyloglucan from tomato fruit), to produce xyloglucan oligosaccharides. May be superfluous in xyloglucan degradation compared to BoGH5A (AC A7LXT7), the other Xyloglucan-specific endo-beta-1,4-glucanase.</text>
</comment>
<comment type="catalytic activity">
    <reaction evidence="5">
        <text>xyloglucan + H2O = xyloglucan oligosaccharides.</text>
        <dbReference type="EC" id="3.2.1.151"/>
    </reaction>
</comment>
<comment type="biophysicochemical properties">
    <phDependence>
        <text evidence="5">Optimum pH is 6.0-7.0.</text>
    </phDependence>
</comment>
<comment type="pathway">
    <text evidence="5">Glucan metabolism; xyloglucan degradation.</text>
</comment>
<comment type="subcellular location">
    <subcellularLocation>
        <location evidence="6">Cell outer membrane</location>
        <topology evidence="1">Lipid-anchor</topology>
    </subcellularLocation>
    <text evidence="5">Cell outer membrane localization is predicted by analogy with the archetypal sus locus.</text>
</comment>
<comment type="disruption phenotype">
    <text evidence="5">No visible phenotype. No effect on growth.</text>
</comment>
<comment type="miscellaneous">
    <text evidence="7">Gut bacteria supply the human body with energy from dietary polysaccharides through glycosidases that are absent in the human genome. Xyloglucans are a ubiquitous family of highly branched plant cell wall polysaccharides present in the vegetables we consume. Enzymes involved in xyloglucan degradation mediate the conversion of otherwise indigestible plant polysaccharides to short-chain fatty acids (PubMed:24463512).</text>
</comment>
<comment type="similarity">
    <text evidence="4 6">Belongs to the glycosyl hydrolase 9 (cellulase E) family.</text>
</comment>
<keyword id="KW-0002">3D-structure</keyword>
<keyword id="KW-0119">Carbohydrate metabolism</keyword>
<keyword id="KW-0998">Cell outer membrane</keyword>
<keyword id="KW-0326">Glycosidase</keyword>
<keyword id="KW-0378">Hydrolase</keyword>
<keyword id="KW-0449">Lipoprotein</keyword>
<keyword id="KW-0472">Membrane</keyword>
<keyword id="KW-0564">Palmitate</keyword>
<keyword id="KW-0624">Polysaccharide degradation</keyword>
<keyword id="KW-0732">Signal</keyword>
<reference key="1">
    <citation type="submission" date="2007-04" db="EMBL/GenBank/DDBJ databases">
        <title>Draft genome sequence of Bacteroides ovatus (ATCC 8483).</title>
        <authorList>
            <person name="Sudarsanam P."/>
            <person name="Ley R."/>
            <person name="Guruge J."/>
            <person name="Turnbaugh P.J."/>
            <person name="Mahowald M."/>
            <person name="Liep D."/>
            <person name="Gordon J."/>
        </authorList>
    </citation>
    <scope>NUCLEOTIDE SEQUENCE [LARGE SCALE GENOMIC DNA]</scope>
    <source>
        <strain>ATCC 8483 / DSM 1896 / JCM 5824 / BCRC 10623 / CCUG 4943 / NCTC 11153</strain>
    </source>
</reference>
<reference key="2">
    <citation type="journal article" date="2014" name="Nature">
        <title>A discrete genetic locus confers xyloglucan metabolism in select human gut Bacteroidetes.</title>
        <authorList>
            <person name="Larsbrink J."/>
            <person name="Rogers T.E."/>
            <person name="Hemsworth G.R."/>
            <person name="McKee L.S."/>
            <person name="Tauzin A.S."/>
            <person name="Spadiut O."/>
            <person name="Klinter S."/>
            <person name="Pudlo N.A."/>
            <person name="Urs K."/>
            <person name="Koropatkin N.M."/>
            <person name="Creagh A.L."/>
            <person name="Haynes C.A."/>
            <person name="Kelly A.G."/>
            <person name="Cederholm S.N."/>
            <person name="Davies G.J."/>
            <person name="Martens E.C."/>
            <person name="Brumer H."/>
        </authorList>
    </citation>
    <scope>FUNCTION</scope>
    <scope>CATALYTIC ACTIVITY</scope>
    <scope>BIOPHYSICOCHEMICAL PROPERTIES</scope>
    <scope>PATHWAY</scope>
    <scope>DISRUPTION PHENOTYPE</scope>
</reference>
<feature type="signal peptide" evidence="1">
    <location>
        <begin position="1"/>
        <end position="19"/>
    </location>
</feature>
<feature type="chain" id="PRO_0000425895" description="Xyloglucan-specific endo-beta-1,4-glucanase BoGH9A">
    <location>
        <begin position="20"/>
        <end position="587"/>
    </location>
</feature>
<feature type="active site" description="Nucleophile" evidence="4">
    <location>
        <position position="185"/>
    </location>
</feature>
<feature type="active site" evidence="2">
    <location>
        <position position="511"/>
    </location>
</feature>
<feature type="active site" evidence="3">
    <location>
        <position position="553"/>
    </location>
</feature>
<feature type="active site" description="Proton donor" evidence="3">
    <location>
        <position position="562"/>
    </location>
</feature>
<feature type="lipid moiety-binding region" description="N-palmitoyl cysteine" evidence="1">
    <location>
        <position position="20"/>
    </location>
</feature>
<feature type="lipid moiety-binding region" description="S-diacylglycerol cysteine" evidence="1">
    <location>
        <position position="20"/>
    </location>
</feature>
<feature type="helix" evidence="8">
    <location>
        <begin position="29"/>
        <end position="31"/>
    </location>
</feature>
<feature type="strand" evidence="8">
    <location>
        <begin position="46"/>
        <end position="49"/>
    </location>
</feature>
<feature type="strand" evidence="8">
    <location>
        <begin position="56"/>
        <end position="61"/>
    </location>
</feature>
<feature type="turn" evidence="8">
    <location>
        <begin position="62"/>
        <end position="64"/>
    </location>
</feature>
<feature type="strand" evidence="8">
    <location>
        <begin position="67"/>
        <end position="73"/>
    </location>
</feature>
<feature type="strand" evidence="8">
    <location>
        <begin position="86"/>
        <end position="90"/>
    </location>
</feature>
<feature type="strand" evidence="8">
    <location>
        <begin position="98"/>
        <end position="104"/>
    </location>
</feature>
<feature type="strand" evidence="8">
    <location>
        <begin position="107"/>
        <end position="113"/>
    </location>
</feature>
<feature type="turn" evidence="8">
    <location>
        <begin position="115"/>
        <end position="118"/>
    </location>
</feature>
<feature type="helix" evidence="8">
    <location>
        <begin position="119"/>
        <end position="131"/>
    </location>
</feature>
<feature type="helix" evidence="8">
    <location>
        <begin position="140"/>
        <end position="143"/>
    </location>
</feature>
<feature type="strand" evidence="8">
    <location>
        <begin position="156"/>
        <end position="159"/>
    </location>
</feature>
<feature type="helix" evidence="8">
    <location>
        <begin position="161"/>
        <end position="163"/>
    </location>
</feature>
<feature type="strand" evidence="8">
    <location>
        <begin position="183"/>
        <end position="186"/>
    </location>
</feature>
<feature type="helix" evidence="8">
    <location>
        <begin position="190"/>
        <end position="206"/>
    </location>
</feature>
<feature type="helix" evidence="8">
    <location>
        <begin position="208"/>
        <end position="213"/>
    </location>
</feature>
<feature type="turn" evidence="8">
    <location>
        <begin position="219"/>
        <end position="222"/>
    </location>
</feature>
<feature type="strand" evidence="8">
    <location>
        <begin position="223"/>
        <end position="225"/>
    </location>
</feature>
<feature type="helix" evidence="8">
    <location>
        <begin position="227"/>
        <end position="240"/>
    </location>
</feature>
<feature type="turn" evidence="8">
    <location>
        <begin position="245"/>
        <end position="247"/>
    </location>
</feature>
<feature type="strand" evidence="8">
    <location>
        <begin position="250"/>
        <end position="255"/>
    </location>
</feature>
<feature type="helix" evidence="8">
    <location>
        <begin position="265"/>
        <end position="267"/>
    </location>
</feature>
<feature type="helix" evidence="8">
    <location>
        <begin position="279"/>
        <end position="295"/>
    </location>
</feature>
<feature type="turn" evidence="8">
    <location>
        <begin position="296"/>
        <end position="298"/>
    </location>
</feature>
<feature type="turn" evidence="8">
    <location>
        <begin position="300"/>
        <end position="302"/>
    </location>
</feature>
<feature type="helix" evidence="8">
    <location>
        <begin position="306"/>
        <end position="323"/>
    </location>
</feature>
<feature type="helix" evidence="8">
    <location>
        <begin position="331"/>
        <end position="335"/>
    </location>
</feature>
<feature type="strand" evidence="8">
    <location>
        <begin position="338"/>
        <end position="340"/>
    </location>
</feature>
<feature type="helix" evidence="8">
    <location>
        <begin position="353"/>
        <end position="367"/>
    </location>
</feature>
<feature type="helix" evidence="8">
    <location>
        <begin position="370"/>
        <end position="378"/>
    </location>
</feature>
<feature type="helix" evidence="8">
    <location>
        <begin position="393"/>
        <end position="400"/>
    </location>
</feature>
<feature type="helix" evidence="8">
    <location>
        <begin position="409"/>
        <end position="430"/>
    </location>
</feature>
<feature type="helix" evidence="8">
    <location>
        <begin position="433"/>
        <end position="435"/>
    </location>
</feature>
<feature type="strand" evidence="8">
    <location>
        <begin position="439"/>
        <end position="445"/>
    </location>
</feature>
<feature type="helix" evidence="8">
    <location>
        <begin position="446"/>
        <end position="448"/>
    </location>
</feature>
<feature type="helix" evidence="8">
    <location>
        <begin position="453"/>
        <end position="456"/>
    </location>
</feature>
<feature type="helix" evidence="8">
    <location>
        <begin position="458"/>
        <end position="472"/>
    </location>
</feature>
<feature type="helix" evidence="8">
    <location>
        <begin position="475"/>
        <end position="488"/>
    </location>
</feature>
<feature type="strand" evidence="8">
    <location>
        <begin position="492"/>
        <end position="494"/>
    </location>
</feature>
<feature type="strand" evidence="8">
    <location>
        <begin position="503"/>
        <end position="505"/>
    </location>
</feature>
<feature type="helix" evidence="8">
    <location>
        <begin position="513"/>
        <end position="517"/>
    </location>
</feature>
<feature type="helix" evidence="8">
    <location>
        <begin position="547"/>
        <end position="549"/>
    </location>
</feature>
<feature type="helix" evidence="8">
    <location>
        <begin position="558"/>
        <end position="561"/>
    </location>
</feature>
<feature type="helix" evidence="8">
    <location>
        <begin position="565"/>
        <end position="581"/>
    </location>
</feature>
<dbReference type="EC" id="3.2.1.151"/>
<dbReference type="EMBL" id="AAXF02000049">
    <property type="protein sequence ID" value="EDO11440.1"/>
    <property type="molecule type" value="Genomic_DNA"/>
</dbReference>
<dbReference type="RefSeq" id="WP_004298437.1">
    <property type="nucleotide sequence ID" value="NZ_DS264579.1"/>
</dbReference>
<dbReference type="PDB" id="6DHT">
    <property type="method" value="X-ray"/>
    <property type="resolution" value="1.42 A"/>
    <property type="chains" value="A=21-583"/>
</dbReference>
<dbReference type="PDBsum" id="6DHT"/>
<dbReference type="SMR" id="A7LXT3"/>
<dbReference type="CAZy" id="GH9">
    <property type="family name" value="Glycoside Hydrolase Family 9"/>
</dbReference>
<dbReference type="eggNOG" id="COG3291">
    <property type="taxonomic scope" value="Bacteria"/>
</dbReference>
<dbReference type="HOGENOM" id="CLU_006010_2_1_10"/>
<dbReference type="UniPathway" id="UPA01045"/>
<dbReference type="Proteomes" id="UP000005475">
    <property type="component" value="Unassembled WGS sequence"/>
</dbReference>
<dbReference type="GO" id="GO:0009279">
    <property type="term" value="C:cell outer membrane"/>
    <property type="evidence" value="ECO:0007669"/>
    <property type="project" value="UniProtKB-SubCell"/>
</dbReference>
<dbReference type="GO" id="GO:0008810">
    <property type="term" value="F:cellulase activity"/>
    <property type="evidence" value="ECO:0007669"/>
    <property type="project" value="InterPro"/>
</dbReference>
<dbReference type="GO" id="GO:0033946">
    <property type="term" value="F:xyloglucan-specific endo-beta-1,4-glucanase activity"/>
    <property type="evidence" value="ECO:0000314"/>
    <property type="project" value="UniProtKB"/>
</dbReference>
<dbReference type="GO" id="GO:0085030">
    <property type="term" value="P:symbiotic process benefiting host"/>
    <property type="evidence" value="ECO:0000314"/>
    <property type="project" value="UniProtKB"/>
</dbReference>
<dbReference type="GO" id="GO:2000899">
    <property type="term" value="P:xyloglucan catabolic process"/>
    <property type="evidence" value="ECO:0000314"/>
    <property type="project" value="UniProtKB"/>
</dbReference>
<dbReference type="CDD" id="cd02850">
    <property type="entry name" value="E_set_Cellulase_N"/>
    <property type="match status" value="1"/>
</dbReference>
<dbReference type="Gene3D" id="1.50.10.10">
    <property type="match status" value="1"/>
</dbReference>
<dbReference type="Gene3D" id="2.60.40.10">
    <property type="entry name" value="Immunoglobulins"/>
    <property type="match status" value="1"/>
</dbReference>
<dbReference type="InterPro" id="IPR008928">
    <property type="entry name" value="6-hairpin_glycosidase_sf"/>
</dbReference>
<dbReference type="InterPro" id="IPR012341">
    <property type="entry name" value="6hp_glycosidase-like_sf"/>
</dbReference>
<dbReference type="InterPro" id="IPR004197">
    <property type="entry name" value="Cellulase_Ig-like"/>
</dbReference>
<dbReference type="InterPro" id="IPR001701">
    <property type="entry name" value="Glyco_hydro_9"/>
</dbReference>
<dbReference type="InterPro" id="IPR033126">
    <property type="entry name" value="Glyco_hydro_9_Asp/Glu_AS"/>
</dbReference>
<dbReference type="InterPro" id="IPR018221">
    <property type="entry name" value="Glyco_hydro_9_His_AS"/>
</dbReference>
<dbReference type="InterPro" id="IPR013783">
    <property type="entry name" value="Ig-like_fold"/>
</dbReference>
<dbReference type="InterPro" id="IPR014756">
    <property type="entry name" value="Ig_E-set"/>
</dbReference>
<dbReference type="PANTHER" id="PTHR22298">
    <property type="entry name" value="ENDO-1,4-BETA-GLUCANASE"/>
    <property type="match status" value="1"/>
</dbReference>
<dbReference type="Pfam" id="PF02927">
    <property type="entry name" value="CelD_N"/>
    <property type="match status" value="1"/>
</dbReference>
<dbReference type="Pfam" id="PF00759">
    <property type="entry name" value="Glyco_hydro_9"/>
    <property type="match status" value="1"/>
</dbReference>
<dbReference type="SUPFAM" id="SSF81296">
    <property type="entry name" value="E set domains"/>
    <property type="match status" value="1"/>
</dbReference>
<dbReference type="SUPFAM" id="SSF48208">
    <property type="entry name" value="Six-hairpin glycosidases"/>
    <property type="match status" value="1"/>
</dbReference>
<dbReference type="PROSITE" id="PS60032">
    <property type="entry name" value="GH9_1"/>
    <property type="match status" value="1"/>
</dbReference>
<dbReference type="PROSITE" id="PS00592">
    <property type="entry name" value="GH9_2"/>
    <property type="match status" value="1"/>
</dbReference>
<dbReference type="PROSITE" id="PS00698">
    <property type="entry name" value="GH9_3"/>
    <property type="match status" value="1"/>
</dbReference>
<dbReference type="PROSITE" id="PS51257">
    <property type="entry name" value="PROKAR_LIPOPROTEIN"/>
    <property type="match status" value="1"/>
</dbReference>
<protein>
    <recommendedName>
        <fullName>Xyloglucan-specific endo-beta-1,4-glucanase BoGH9A</fullName>
        <ecNumber>3.2.1.151</ecNumber>
    </recommendedName>
    <alternativeName>
        <fullName>Glycosyl hydrolase family protein 9A</fullName>
        <shortName>BoGH9A</shortName>
    </alternativeName>
</protein>
<accession>A7LXT3</accession>
<gene>
    <name type="ORF">BACOVA_02649</name>
</gene>
<organism>
    <name type="scientific">Bacteroides ovatus (strain ATCC 8483 / DSM 1896 / JCM 5824 / BCRC 10623 / CCUG 4943 / NCTC 11153)</name>
    <dbReference type="NCBI Taxonomy" id="411476"/>
    <lineage>
        <taxon>Bacteria</taxon>
        <taxon>Pseudomonadati</taxon>
        <taxon>Bacteroidota</taxon>
        <taxon>Bacteroidia</taxon>
        <taxon>Bacteroidales</taxon>
        <taxon>Bacteroidaceae</taxon>
        <taxon>Bacteroides</taxon>
    </lineage>
</organism>
<sequence>MKIVRYIALFGILSGLAVACTPSTSVIPNDAIRLNQLGYYPNQEKIAVVDSGKVEEFVIWDAVSGEQVFVGKSLYTAKSAWSDKTRTTLDFSAVTTPGKYILKVNGASVTFLIKDSVLSPLADAALKSFYYQRTAMPIEEQYAGQWHRMAGHPDNHVLIHPSAASPDRPAGTIVSSSKGWYDAGDYNKYIVNSGYSIGLMQSIYQLFLDYFSRQKINIPESNNHTPDLLDEMQFNLDWMLTMQDPEDGGVYHKLTTPFFEGFVKPVDCKQQRYVVQKSVTAALDFAAVMAQSSRLFASYEEDYPGFSKRALLAAEKAYAWAEKHPEAYYNQNLLNQKYQPAIATGEYGDTHADDEFFWAASELYFSTGKEIYREEAIKKAPQIYTAPGWGNTFALGIFAWLQPGRELNEADRRFADSLKTELLKYADKVIEGAEQTPFHAPYGNDAKDFFWGCLAEKCMNQGVSLMYAYLQTGKDVYLTNAYRNMDYILGRNATGFCYVTGLGTKSPKHPHHRLSASDDIEDPIPGFLVGGPNPGQQDGAFYPTASPDESYVDTEDSYASNEVAINWNAALVALASSLDALAVYSVK</sequence>
<evidence type="ECO:0000255" key="1">
    <source>
        <dbReference type="PROSITE-ProRule" id="PRU00303"/>
    </source>
</evidence>
<evidence type="ECO:0000255" key="2">
    <source>
        <dbReference type="PROSITE-ProRule" id="PRU10059"/>
    </source>
</evidence>
<evidence type="ECO:0000255" key="3">
    <source>
        <dbReference type="PROSITE-ProRule" id="PRU10060"/>
    </source>
</evidence>
<evidence type="ECO:0000255" key="4">
    <source>
        <dbReference type="PROSITE-ProRule" id="PRU10140"/>
    </source>
</evidence>
<evidence type="ECO:0000269" key="5">
    <source>
    </source>
</evidence>
<evidence type="ECO:0000305" key="6"/>
<evidence type="ECO:0000305" key="7">
    <source>
    </source>
</evidence>
<evidence type="ECO:0007829" key="8">
    <source>
        <dbReference type="PDB" id="6DHT"/>
    </source>
</evidence>